<proteinExistence type="inferred from homology"/>
<name>PURT_PSESM</name>
<sequence>MTRIGTPLSPTATRVLFCGSGELGKEVVIELQRLGVEVIAVDRYENAPAMQVAHRSHVINMLDGAALRAVIELEKPHFIVPEIEAIATATLVELEAEGFTVIPTARAAQLTMNREGIRRLAAEELKLPTSPYHFADTFEAYSKAVEDLGFPCVVKPVMSSSGKGQSLLKSADDVQKAWDYAQEGGRAGKGRVIIEGFIDFDYEITLLTVRHIGGTTFCAPVGHRQEKGDYQESWQPQAMSPAALAESERVAKAVTESLGGRGMFGVELFIKGDQVWFSEVSPRPHDTGLVTLISQDLSQFALHARAILGLPIPLIRQFGPSASAVILVEGQSTQTAFANLGAALAEPDTALRLFGKPEVNGQRRMGVALARDESIEAARAKATRASSAVVVEL</sequence>
<dbReference type="EC" id="6.3.1.21" evidence="1"/>
<dbReference type="EMBL" id="AE016853">
    <property type="protein sequence ID" value="AAO54989.1"/>
    <property type="molecule type" value="Genomic_DNA"/>
</dbReference>
<dbReference type="RefSeq" id="NP_791294.1">
    <property type="nucleotide sequence ID" value="NC_004578.1"/>
</dbReference>
<dbReference type="RefSeq" id="WP_005765861.1">
    <property type="nucleotide sequence ID" value="NC_004578.1"/>
</dbReference>
<dbReference type="SMR" id="Q886V7"/>
<dbReference type="STRING" id="223283.PSPTO_1468"/>
<dbReference type="GeneID" id="1183105"/>
<dbReference type="KEGG" id="pst:PSPTO_1468"/>
<dbReference type="PATRIC" id="fig|223283.9.peg.1489"/>
<dbReference type="eggNOG" id="COG0027">
    <property type="taxonomic scope" value="Bacteria"/>
</dbReference>
<dbReference type="HOGENOM" id="CLU_011534_1_3_6"/>
<dbReference type="OrthoDB" id="9804625at2"/>
<dbReference type="PhylomeDB" id="Q886V7"/>
<dbReference type="UniPathway" id="UPA00074">
    <property type="reaction ID" value="UER00127"/>
</dbReference>
<dbReference type="Proteomes" id="UP000002515">
    <property type="component" value="Chromosome"/>
</dbReference>
<dbReference type="GO" id="GO:0005829">
    <property type="term" value="C:cytosol"/>
    <property type="evidence" value="ECO:0007669"/>
    <property type="project" value="TreeGrafter"/>
</dbReference>
<dbReference type="GO" id="GO:0005524">
    <property type="term" value="F:ATP binding"/>
    <property type="evidence" value="ECO:0007669"/>
    <property type="project" value="UniProtKB-UniRule"/>
</dbReference>
<dbReference type="GO" id="GO:0000287">
    <property type="term" value="F:magnesium ion binding"/>
    <property type="evidence" value="ECO:0007669"/>
    <property type="project" value="InterPro"/>
</dbReference>
<dbReference type="GO" id="GO:0043815">
    <property type="term" value="F:phosphoribosylglycinamide formyltransferase 2 activity"/>
    <property type="evidence" value="ECO:0007669"/>
    <property type="project" value="UniProtKB-UniRule"/>
</dbReference>
<dbReference type="GO" id="GO:0004644">
    <property type="term" value="F:phosphoribosylglycinamide formyltransferase activity"/>
    <property type="evidence" value="ECO:0007669"/>
    <property type="project" value="InterPro"/>
</dbReference>
<dbReference type="GO" id="GO:0006189">
    <property type="term" value="P:'de novo' IMP biosynthetic process"/>
    <property type="evidence" value="ECO:0007669"/>
    <property type="project" value="UniProtKB-UniRule"/>
</dbReference>
<dbReference type="FunFam" id="3.30.1490.20:FF:000013">
    <property type="entry name" value="Formate-dependent phosphoribosylglycinamide formyltransferase"/>
    <property type="match status" value="1"/>
</dbReference>
<dbReference type="FunFam" id="3.30.470.20:FF:000027">
    <property type="entry name" value="Formate-dependent phosphoribosylglycinamide formyltransferase"/>
    <property type="match status" value="1"/>
</dbReference>
<dbReference type="FunFam" id="3.40.50.20:FF:000007">
    <property type="entry name" value="Formate-dependent phosphoribosylglycinamide formyltransferase"/>
    <property type="match status" value="1"/>
</dbReference>
<dbReference type="Gene3D" id="3.40.50.20">
    <property type="match status" value="1"/>
</dbReference>
<dbReference type="Gene3D" id="3.30.1490.20">
    <property type="entry name" value="ATP-grasp fold, A domain"/>
    <property type="match status" value="1"/>
</dbReference>
<dbReference type="Gene3D" id="3.30.470.20">
    <property type="entry name" value="ATP-grasp fold, B domain"/>
    <property type="match status" value="1"/>
</dbReference>
<dbReference type="HAMAP" id="MF_01643">
    <property type="entry name" value="PurT"/>
    <property type="match status" value="1"/>
</dbReference>
<dbReference type="InterPro" id="IPR011761">
    <property type="entry name" value="ATP-grasp"/>
</dbReference>
<dbReference type="InterPro" id="IPR003135">
    <property type="entry name" value="ATP-grasp_carboxylate-amine"/>
</dbReference>
<dbReference type="InterPro" id="IPR013815">
    <property type="entry name" value="ATP_grasp_subdomain_1"/>
</dbReference>
<dbReference type="InterPro" id="IPR016185">
    <property type="entry name" value="PreATP-grasp_dom_sf"/>
</dbReference>
<dbReference type="InterPro" id="IPR005862">
    <property type="entry name" value="PurT"/>
</dbReference>
<dbReference type="InterPro" id="IPR054350">
    <property type="entry name" value="PurT/PurK_preATP-grasp"/>
</dbReference>
<dbReference type="InterPro" id="IPR048740">
    <property type="entry name" value="PurT_C"/>
</dbReference>
<dbReference type="NCBIfam" id="NF006766">
    <property type="entry name" value="PRK09288.1"/>
    <property type="match status" value="1"/>
</dbReference>
<dbReference type="NCBIfam" id="TIGR01142">
    <property type="entry name" value="purT"/>
    <property type="match status" value="1"/>
</dbReference>
<dbReference type="PANTHER" id="PTHR43055">
    <property type="entry name" value="FORMATE-DEPENDENT PHOSPHORIBOSYLGLYCINAMIDE FORMYLTRANSFERASE"/>
    <property type="match status" value="1"/>
</dbReference>
<dbReference type="PANTHER" id="PTHR43055:SF1">
    <property type="entry name" value="FORMATE-DEPENDENT PHOSPHORIBOSYLGLYCINAMIDE FORMYLTRANSFERASE"/>
    <property type="match status" value="1"/>
</dbReference>
<dbReference type="Pfam" id="PF02222">
    <property type="entry name" value="ATP-grasp"/>
    <property type="match status" value="1"/>
</dbReference>
<dbReference type="Pfam" id="PF21244">
    <property type="entry name" value="PurT_C"/>
    <property type="match status" value="1"/>
</dbReference>
<dbReference type="Pfam" id="PF22660">
    <property type="entry name" value="RS_preATP-grasp-like"/>
    <property type="match status" value="1"/>
</dbReference>
<dbReference type="SUPFAM" id="SSF56059">
    <property type="entry name" value="Glutathione synthetase ATP-binding domain-like"/>
    <property type="match status" value="1"/>
</dbReference>
<dbReference type="SUPFAM" id="SSF52440">
    <property type="entry name" value="PreATP-grasp domain"/>
    <property type="match status" value="1"/>
</dbReference>
<dbReference type="PROSITE" id="PS50975">
    <property type="entry name" value="ATP_GRASP"/>
    <property type="match status" value="1"/>
</dbReference>
<evidence type="ECO:0000255" key="1">
    <source>
        <dbReference type="HAMAP-Rule" id="MF_01643"/>
    </source>
</evidence>
<feature type="chain" id="PRO_0000319217" description="Formate-dependent phosphoribosylglycinamide formyltransferase">
    <location>
        <begin position="1"/>
        <end position="393"/>
    </location>
</feature>
<feature type="domain" description="ATP-grasp" evidence="1">
    <location>
        <begin position="119"/>
        <end position="308"/>
    </location>
</feature>
<feature type="binding site" evidence="1">
    <location>
        <begin position="22"/>
        <end position="23"/>
    </location>
    <ligand>
        <name>N(1)-(5-phospho-beta-D-ribosyl)glycinamide</name>
        <dbReference type="ChEBI" id="CHEBI:143788"/>
    </ligand>
</feature>
<feature type="binding site" evidence="1">
    <location>
        <position position="82"/>
    </location>
    <ligand>
        <name>N(1)-(5-phospho-beta-D-ribosyl)glycinamide</name>
        <dbReference type="ChEBI" id="CHEBI:143788"/>
    </ligand>
</feature>
<feature type="binding site" evidence="1">
    <location>
        <position position="114"/>
    </location>
    <ligand>
        <name>ATP</name>
        <dbReference type="ChEBI" id="CHEBI:30616"/>
    </ligand>
</feature>
<feature type="binding site" evidence="1">
    <location>
        <position position="155"/>
    </location>
    <ligand>
        <name>ATP</name>
        <dbReference type="ChEBI" id="CHEBI:30616"/>
    </ligand>
</feature>
<feature type="binding site" evidence="1">
    <location>
        <begin position="160"/>
        <end position="165"/>
    </location>
    <ligand>
        <name>ATP</name>
        <dbReference type="ChEBI" id="CHEBI:30616"/>
    </ligand>
</feature>
<feature type="binding site" evidence="1">
    <location>
        <begin position="195"/>
        <end position="198"/>
    </location>
    <ligand>
        <name>ATP</name>
        <dbReference type="ChEBI" id="CHEBI:30616"/>
    </ligand>
</feature>
<feature type="binding site" evidence="1">
    <location>
        <position position="203"/>
    </location>
    <ligand>
        <name>ATP</name>
        <dbReference type="ChEBI" id="CHEBI:30616"/>
    </ligand>
</feature>
<feature type="binding site" evidence="1">
    <location>
        <position position="267"/>
    </location>
    <ligand>
        <name>Mg(2+)</name>
        <dbReference type="ChEBI" id="CHEBI:18420"/>
    </ligand>
</feature>
<feature type="binding site" evidence="1">
    <location>
        <position position="279"/>
    </location>
    <ligand>
        <name>Mg(2+)</name>
        <dbReference type="ChEBI" id="CHEBI:18420"/>
    </ligand>
</feature>
<feature type="binding site" evidence="1">
    <location>
        <position position="286"/>
    </location>
    <ligand>
        <name>N(1)-(5-phospho-beta-D-ribosyl)glycinamide</name>
        <dbReference type="ChEBI" id="CHEBI:143788"/>
    </ligand>
</feature>
<feature type="binding site" evidence="1">
    <location>
        <position position="356"/>
    </location>
    <ligand>
        <name>N(1)-(5-phospho-beta-D-ribosyl)glycinamide</name>
        <dbReference type="ChEBI" id="CHEBI:143788"/>
    </ligand>
</feature>
<feature type="binding site" evidence="1">
    <location>
        <begin position="363"/>
        <end position="364"/>
    </location>
    <ligand>
        <name>N(1)-(5-phospho-beta-D-ribosyl)glycinamide</name>
        <dbReference type="ChEBI" id="CHEBI:143788"/>
    </ligand>
</feature>
<reference key="1">
    <citation type="journal article" date="2003" name="Proc. Natl. Acad. Sci. U.S.A.">
        <title>The complete genome sequence of the Arabidopsis and tomato pathogen Pseudomonas syringae pv. tomato DC3000.</title>
        <authorList>
            <person name="Buell C.R."/>
            <person name="Joardar V."/>
            <person name="Lindeberg M."/>
            <person name="Selengut J."/>
            <person name="Paulsen I.T."/>
            <person name="Gwinn M.L."/>
            <person name="Dodson R.J."/>
            <person name="DeBoy R.T."/>
            <person name="Durkin A.S."/>
            <person name="Kolonay J.F."/>
            <person name="Madupu R."/>
            <person name="Daugherty S.C."/>
            <person name="Brinkac L.M."/>
            <person name="Beanan M.J."/>
            <person name="Haft D.H."/>
            <person name="Nelson W.C."/>
            <person name="Davidsen T.M."/>
            <person name="Zafar N."/>
            <person name="Zhou L."/>
            <person name="Liu J."/>
            <person name="Yuan Q."/>
            <person name="Khouri H.M."/>
            <person name="Fedorova N.B."/>
            <person name="Tran B."/>
            <person name="Russell D."/>
            <person name="Berry K.J."/>
            <person name="Utterback T.R."/>
            <person name="Van Aken S.E."/>
            <person name="Feldblyum T.V."/>
            <person name="D'Ascenzo M."/>
            <person name="Deng W.-L."/>
            <person name="Ramos A.R."/>
            <person name="Alfano J.R."/>
            <person name="Cartinhour S."/>
            <person name="Chatterjee A.K."/>
            <person name="Delaney T.P."/>
            <person name="Lazarowitz S.G."/>
            <person name="Martin G.B."/>
            <person name="Schneider D.J."/>
            <person name="Tang X."/>
            <person name="Bender C.L."/>
            <person name="White O."/>
            <person name="Fraser C.M."/>
            <person name="Collmer A."/>
        </authorList>
    </citation>
    <scope>NUCLEOTIDE SEQUENCE [LARGE SCALE GENOMIC DNA]</scope>
    <source>
        <strain>ATCC BAA-871 / DC3000</strain>
    </source>
</reference>
<accession>Q886V7</accession>
<organism>
    <name type="scientific">Pseudomonas syringae pv. tomato (strain ATCC BAA-871 / DC3000)</name>
    <dbReference type="NCBI Taxonomy" id="223283"/>
    <lineage>
        <taxon>Bacteria</taxon>
        <taxon>Pseudomonadati</taxon>
        <taxon>Pseudomonadota</taxon>
        <taxon>Gammaproteobacteria</taxon>
        <taxon>Pseudomonadales</taxon>
        <taxon>Pseudomonadaceae</taxon>
        <taxon>Pseudomonas</taxon>
    </lineage>
</organism>
<keyword id="KW-0067">ATP-binding</keyword>
<keyword id="KW-0436">Ligase</keyword>
<keyword id="KW-0460">Magnesium</keyword>
<keyword id="KW-0479">Metal-binding</keyword>
<keyword id="KW-0547">Nucleotide-binding</keyword>
<keyword id="KW-0658">Purine biosynthesis</keyword>
<keyword id="KW-1185">Reference proteome</keyword>
<protein>
    <recommendedName>
        <fullName evidence="1">Formate-dependent phosphoribosylglycinamide formyltransferase</fullName>
        <ecNumber evidence="1">6.3.1.21</ecNumber>
    </recommendedName>
    <alternativeName>
        <fullName evidence="1">5'-phosphoribosylglycinamide transformylase 2</fullName>
    </alternativeName>
    <alternativeName>
        <fullName evidence="1">Formate-dependent GAR transformylase</fullName>
    </alternativeName>
    <alternativeName>
        <fullName evidence="1">GAR transformylase 2</fullName>
        <shortName evidence="1">GART 2</shortName>
    </alternativeName>
    <alternativeName>
        <fullName evidence="1">Non-folate glycinamide ribonucleotide transformylase</fullName>
    </alternativeName>
    <alternativeName>
        <fullName evidence="1">Phosphoribosylglycinamide formyltransferase 2</fullName>
    </alternativeName>
</protein>
<gene>
    <name evidence="1" type="primary">purT</name>
    <name type="ordered locus">PSPTO_1468</name>
</gene>
<comment type="function">
    <text evidence="1">Involved in the de novo purine biosynthesis. Catalyzes the transfer of formate to 5-phospho-ribosyl-glycinamide (GAR), producing 5-phospho-ribosyl-N-formylglycinamide (FGAR). Formate is provided by PurU via hydrolysis of 10-formyl-tetrahydrofolate.</text>
</comment>
<comment type="catalytic activity">
    <reaction evidence="1">
        <text>N(1)-(5-phospho-beta-D-ribosyl)glycinamide + formate + ATP = N(2)-formyl-N(1)-(5-phospho-beta-D-ribosyl)glycinamide + ADP + phosphate + H(+)</text>
        <dbReference type="Rhea" id="RHEA:24829"/>
        <dbReference type="ChEBI" id="CHEBI:15378"/>
        <dbReference type="ChEBI" id="CHEBI:15740"/>
        <dbReference type="ChEBI" id="CHEBI:30616"/>
        <dbReference type="ChEBI" id="CHEBI:43474"/>
        <dbReference type="ChEBI" id="CHEBI:143788"/>
        <dbReference type="ChEBI" id="CHEBI:147286"/>
        <dbReference type="ChEBI" id="CHEBI:456216"/>
        <dbReference type="EC" id="6.3.1.21"/>
    </reaction>
    <physiologicalReaction direction="left-to-right" evidence="1">
        <dbReference type="Rhea" id="RHEA:24830"/>
    </physiologicalReaction>
</comment>
<comment type="pathway">
    <text evidence="1">Purine metabolism; IMP biosynthesis via de novo pathway; N(2)-formyl-N(1)-(5-phospho-D-ribosyl)glycinamide from N(1)-(5-phospho-D-ribosyl)glycinamide (formate route): step 1/1.</text>
</comment>
<comment type="subunit">
    <text evidence="1">Homodimer.</text>
</comment>
<comment type="similarity">
    <text evidence="1">Belongs to the PurK/PurT family.</text>
</comment>